<keyword id="KW-0067">ATP-binding</keyword>
<keyword id="KW-0173">Coenzyme A biosynthesis</keyword>
<keyword id="KW-0963">Cytoplasm</keyword>
<keyword id="KW-0418">Kinase</keyword>
<keyword id="KW-0547">Nucleotide-binding</keyword>
<keyword id="KW-0808">Transferase</keyword>
<organism>
    <name type="scientific">Pseudomonas putida</name>
    <name type="common">Arthrobacter siderocapsulatus</name>
    <dbReference type="NCBI Taxonomy" id="303"/>
    <lineage>
        <taxon>Bacteria</taxon>
        <taxon>Pseudomonadati</taxon>
        <taxon>Pseudomonadota</taxon>
        <taxon>Gammaproteobacteria</taxon>
        <taxon>Pseudomonadales</taxon>
        <taxon>Pseudomonadaceae</taxon>
        <taxon>Pseudomonas</taxon>
    </lineage>
</organism>
<sequence>MTTAAFTPWILGLTGGIGSGKSAAAERFVELGVHLVDADQAARWVVEPGRPALASIVERFGPGVLLDDGQLDRAALRQLIFADPAQRQWLEALLHPLIGQEIFSYLAKAESPYAVYVSPLLIESGQYRKTQRVLVIDAPQALQMERTLQRDNTSPEQVQAILNAQLAREERLRHADDVVVNDRDLAALHEQIDRLHHFYLTLRGGQP</sequence>
<dbReference type="EC" id="2.7.1.24" evidence="1"/>
<dbReference type="EMBL" id="X74276">
    <property type="protein sequence ID" value="CAA52335.1"/>
    <property type="molecule type" value="Genomic_DNA"/>
</dbReference>
<dbReference type="PIR" id="C36961">
    <property type="entry name" value="C36961"/>
</dbReference>
<dbReference type="SMR" id="P36644"/>
<dbReference type="eggNOG" id="COG0237">
    <property type="taxonomic scope" value="Bacteria"/>
</dbReference>
<dbReference type="UniPathway" id="UPA00241">
    <property type="reaction ID" value="UER00356"/>
</dbReference>
<dbReference type="GO" id="GO:0005737">
    <property type="term" value="C:cytoplasm"/>
    <property type="evidence" value="ECO:0007669"/>
    <property type="project" value="UniProtKB-SubCell"/>
</dbReference>
<dbReference type="GO" id="GO:0005524">
    <property type="term" value="F:ATP binding"/>
    <property type="evidence" value="ECO:0007669"/>
    <property type="project" value="UniProtKB-UniRule"/>
</dbReference>
<dbReference type="GO" id="GO:0004140">
    <property type="term" value="F:dephospho-CoA kinase activity"/>
    <property type="evidence" value="ECO:0007669"/>
    <property type="project" value="UniProtKB-UniRule"/>
</dbReference>
<dbReference type="GO" id="GO:0015937">
    <property type="term" value="P:coenzyme A biosynthetic process"/>
    <property type="evidence" value="ECO:0007669"/>
    <property type="project" value="UniProtKB-UniRule"/>
</dbReference>
<dbReference type="CDD" id="cd02022">
    <property type="entry name" value="DPCK"/>
    <property type="match status" value="1"/>
</dbReference>
<dbReference type="Gene3D" id="3.40.50.300">
    <property type="entry name" value="P-loop containing nucleotide triphosphate hydrolases"/>
    <property type="match status" value="1"/>
</dbReference>
<dbReference type="HAMAP" id="MF_00376">
    <property type="entry name" value="Dephospho_CoA_kinase"/>
    <property type="match status" value="1"/>
</dbReference>
<dbReference type="InterPro" id="IPR001977">
    <property type="entry name" value="Depp_CoAkinase"/>
</dbReference>
<dbReference type="InterPro" id="IPR027417">
    <property type="entry name" value="P-loop_NTPase"/>
</dbReference>
<dbReference type="NCBIfam" id="TIGR00152">
    <property type="entry name" value="dephospho-CoA kinase"/>
    <property type="match status" value="1"/>
</dbReference>
<dbReference type="PANTHER" id="PTHR10695:SF46">
    <property type="entry name" value="BIFUNCTIONAL COENZYME A SYNTHASE-RELATED"/>
    <property type="match status" value="1"/>
</dbReference>
<dbReference type="PANTHER" id="PTHR10695">
    <property type="entry name" value="DEPHOSPHO-COA KINASE-RELATED"/>
    <property type="match status" value="1"/>
</dbReference>
<dbReference type="Pfam" id="PF01121">
    <property type="entry name" value="CoaE"/>
    <property type="match status" value="1"/>
</dbReference>
<dbReference type="SUPFAM" id="SSF52540">
    <property type="entry name" value="P-loop containing nucleoside triphosphate hydrolases"/>
    <property type="match status" value="1"/>
</dbReference>
<dbReference type="PROSITE" id="PS51219">
    <property type="entry name" value="DPCK"/>
    <property type="match status" value="1"/>
</dbReference>
<accession>P36644</accession>
<protein>
    <recommendedName>
        <fullName evidence="1">Dephospho-CoA kinase</fullName>
        <ecNumber evidence="1">2.7.1.24</ecNumber>
    </recommendedName>
    <alternativeName>
        <fullName evidence="1">Dephosphocoenzyme A kinase</fullName>
    </alternativeName>
</protein>
<feature type="chain" id="PRO_0000172982" description="Dephospho-CoA kinase">
    <location>
        <begin position="1"/>
        <end position="207"/>
    </location>
</feature>
<feature type="domain" description="DPCK" evidence="1">
    <location>
        <begin position="10"/>
        <end position="207"/>
    </location>
</feature>
<feature type="binding site" evidence="1">
    <location>
        <begin position="18"/>
        <end position="23"/>
    </location>
    <ligand>
        <name>ATP</name>
        <dbReference type="ChEBI" id="CHEBI:30616"/>
    </ligand>
</feature>
<proteinExistence type="inferred from homology"/>
<gene>
    <name evidence="1" type="primary">coaE</name>
</gene>
<comment type="function">
    <text evidence="1">Catalyzes the phosphorylation of the 3'-hydroxyl group of dephosphocoenzyme A to form coenzyme A.</text>
</comment>
<comment type="catalytic activity">
    <reaction evidence="1">
        <text>3'-dephospho-CoA + ATP = ADP + CoA + H(+)</text>
        <dbReference type="Rhea" id="RHEA:18245"/>
        <dbReference type="ChEBI" id="CHEBI:15378"/>
        <dbReference type="ChEBI" id="CHEBI:30616"/>
        <dbReference type="ChEBI" id="CHEBI:57287"/>
        <dbReference type="ChEBI" id="CHEBI:57328"/>
        <dbReference type="ChEBI" id="CHEBI:456216"/>
        <dbReference type="EC" id="2.7.1.24"/>
    </reaction>
</comment>
<comment type="pathway">
    <text evidence="1">Cofactor biosynthesis; coenzyme A biosynthesis; CoA from (R)-pantothenate: step 5/5.</text>
</comment>
<comment type="subcellular location">
    <subcellularLocation>
        <location evidence="1">Cytoplasm</location>
    </subcellularLocation>
</comment>
<comment type="similarity">
    <text evidence="1 2">Belongs to the CoaE family.</text>
</comment>
<reference key="1">
    <citation type="journal article" date="1994" name="J. Bacteriol.">
        <title>Characterization of type IV pilus genes in plant growth-promoting Pseudomonas putida WCS358.</title>
        <authorList>
            <person name="de Groot A."/>
            <person name="Heijnen I."/>
            <person name="de Cock H."/>
            <person name="Filloux A."/>
            <person name="Tommassen J."/>
        </authorList>
    </citation>
    <scope>NUCLEOTIDE SEQUENCE [GENOMIC DNA]</scope>
    <source>
        <strain>WCS358</strain>
    </source>
</reference>
<name>COAE_PSEPU</name>
<evidence type="ECO:0000255" key="1">
    <source>
        <dbReference type="HAMAP-Rule" id="MF_00376"/>
    </source>
</evidence>
<evidence type="ECO:0000305" key="2"/>